<protein>
    <recommendedName>
        <fullName evidence="1">Large-conductance mechanosensitive channel</fullName>
    </recommendedName>
</protein>
<accession>Q2LUI9</accession>
<gene>
    <name evidence="1" type="primary">mscL</name>
    <name type="ordered locus">SYNAS_18670</name>
    <name type="ORF">SYN_01974</name>
</gene>
<organism>
    <name type="scientific">Syntrophus aciditrophicus (strain SB)</name>
    <dbReference type="NCBI Taxonomy" id="56780"/>
    <lineage>
        <taxon>Bacteria</taxon>
        <taxon>Pseudomonadati</taxon>
        <taxon>Thermodesulfobacteriota</taxon>
        <taxon>Syntrophia</taxon>
        <taxon>Syntrophales</taxon>
        <taxon>Syntrophaceae</taxon>
        <taxon>Syntrophus</taxon>
    </lineage>
</organism>
<feature type="chain" id="PRO_0000238047" description="Large-conductance mechanosensitive channel">
    <location>
        <begin position="1"/>
        <end position="152"/>
    </location>
</feature>
<feature type="transmembrane region" description="Helical" evidence="1">
    <location>
        <begin position="14"/>
        <end position="34"/>
    </location>
</feature>
<feature type="transmembrane region" description="Helical" evidence="1">
    <location>
        <begin position="39"/>
        <end position="59"/>
    </location>
</feature>
<feature type="transmembrane region" description="Helical" evidence="1">
    <location>
        <begin position="85"/>
        <end position="105"/>
    </location>
</feature>
<reference key="1">
    <citation type="journal article" date="2007" name="Proc. Natl. Acad. Sci. U.S.A.">
        <title>The genome of Syntrophus aciditrophicus: life at the thermodynamic limit of microbial growth.</title>
        <authorList>
            <person name="McInerney M.J."/>
            <person name="Rohlin L."/>
            <person name="Mouttaki H."/>
            <person name="Kim U."/>
            <person name="Krupp R.S."/>
            <person name="Rios-Hernandez L."/>
            <person name="Sieber J."/>
            <person name="Struchtemeyer C.G."/>
            <person name="Bhattacharyya A."/>
            <person name="Campbell J.W."/>
            <person name="Gunsalus R.P."/>
        </authorList>
    </citation>
    <scope>NUCLEOTIDE SEQUENCE [LARGE SCALE GENOMIC DNA]</scope>
    <source>
        <strain>SB</strain>
    </source>
</reference>
<keyword id="KW-0997">Cell inner membrane</keyword>
<keyword id="KW-1003">Cell membrane</keyword>
<keyword id="KW-0407">Ion channel</keyword>
<keyword id="KW-0406">Ion transport</keyword>
<keyword id="KW-0472">Membrane</keyword>
<keyword id="KW-1185">Reference proteome</keyword>
<keyword id="KW-0812">Transmembrane</keyword>
<keyword id="KW-1133">Transmembrane helix</keyword>
<keyword id="KW-0813">Transport</keyword>
<comment type="function">
    <text evidence="1">Channel that opens in response to stretch forces in the membrane lipid bilayer. May participate in the regulation of osmotic pressure changes within the cell.</text>
</comment>
<comment type="subunit">
    <text evidence="1">Homopentamer.</text>
</comment>
<comment type="subcellular location">
    <subcellularLocation>
        <location evidence="1">Cell inner membrane</location>
        <topology evidence="1">Multi-pass membrane protein</topology>
    </subcellularLocation>
</comment>
<comment type="similarity">
    <text evidence="1">Belongs to the MscL family.</text>
</comment>
<sequence>MFKEFKEFALKGNVVDMAVGIILGVAFGAIVKSLVDDLLMPGIGILLGSADFSNLFLVIKEGATPGPFTTLADAQKAGAVTINYGLFINTIVNFIIVAFALFLVIRNINQLRRMTEKPPVEEAPTTKDCPYCLSAIPLKATRCPNCTSELKG</sequence>
<name>MSCL_SYNAS</name>
<proteinExistence type="inferred from homology"/>
<evidence type="ECO:0000255" key="1">
    <source>
        <dbReference type="HAMAP-Rule" id="MF_00115"/>
    </source>
</evidence>
<dbReference type="EMBL" id="CP000252">
    <property type="protein sequence ID" value="ABC77746.1"/>
    <property type="molecule type" value="Genomic_DNA"/>
</dbReference>
<dbReference type="RefSeq" id="WP_011417768.1">
    <property type="nucleotide sequence ID" value="NC_007759.1"/>
</dbReference>
<dbReference type="FunCoup" id="Q2LUI9">
    <property type="interactions" value="262"/>
</dbReference>
<dbReference type="STRING" id="56780.SYN_01974"/>
<dbReference type="KEGG" id="sat:SYN_01974"/>
<dbReference type="eggNOG" id="COG1970">
    <property type="taxonomic scope" value="Bacteria"/>
</dbReference>
<dbReference type="HOGENOM" id="CLU_095787_2_3_7"/>
<dbReference type="InParanoid" id="Q2LUI9"/>
<dbReference type="OrthoDB" id="9810350at2"/>
<dbReference type="Proteomes" id="UP000001933">
    <property type="component" value="Chromosome"/>
</dbReference>
<dbReference type="GO" id="GO:0005886">
    <property type="term" value="C:plasma membrane"/>
    <property type="evidence" value="ECO:0007669"/>
    <property type="project" value="UniProtKB-SubCell"/>
</dbReference>
<dbReference type="GO" id="GO:0008381">
    <property type="term" value="F:mechanosensitive monoatomic ion channel activity"/>
    <property type="evidence" value="ECO:0007669"/>
    <property type="project" value="UniProtKB-UniRule"/>
</dbReference>
<dbReference type="Gene3D" id="1.10.1200.120">
    <property type="entry name" value="Large-conductance mechanosensitive channel, MscL, domain 1"/>
    <property type="match status" value="1"/>
</dbReference>
<dbReference type="HAMAP" id="MF_00115">
    <property type="entry name" value="MscL"/>
    <property type="match status" value="1"/>
</dbReference>
<dbReference type="InterPro" id="IPR019823">
    <property type="entry name" value="Mechanosensitive_channel_CS"/>
</dbReference>
<dbReference type="InterPro" id="IPR001185">
    <property type="entry name" value="MS_channel"/>
</dbReference>
<dbReference type="InterPro" id="IPR037673">
    <property type="entry name" value="MSC/AndL"/>
</dbReference>
<dbReference type="InterPro" id="IPR036019">
    <property type="entry name" value="MscL_channel"/>
</dbReference>
<dbReference type="NCBIfam" id="TIGR00220">
    <property type="entry name" value="mscL"/>
    <property type="match status" value="1"/>
</dbReference>
<dbReference type="NCBIfam" id="NF001843">
    <property type="entry name" value="PRK00567.1-4"/>
    <property type="match status" value="1"/>
</dbReference>
<dbReference type="PANTHER" id="PTHR30266:SF2">
    <property type="entry name" value="LARGE-CONDUCTANCE MECHANOSENSITIVE CHANNEL"/>
    <property type="match status" value="1"/>
</dbReference>
<dbReference type="PANTHER" id="PTHR30266">
    <property type="entry name" value="MECHANOSENSITIVE CHANNEL MSCL"/>
    <property type="match status" value="1"/>
</dbReference>
<dbReference type="Pfam" id="PF01741">
    <property type="entry name" value="MscL"/>
    <property type="match status" value="1"/>
</dbReference>
<dbReference type="PRINTS" id="PR01264">
    <property type="entry name" value="MECHCHANNEL"/>
</dbReference>
<dbReference type="SUPFAM" id="SSF81330">
    <property type="entry name" value="Gated mechanosensitive channel"/>
    <property type="match status" value="1"/>
</dbReference>
<dbReference type="PROSITE" id="PS01327">
    <property type="entry name" value="MSCL"/>
    <property type="match status" value="1"/>
</dbReference>